<protein>
    <recommendedName>
        <fullName>Bacitracin synthase 1</fullName>
        <shortName>BA1</shortName>
    </recommendedName>
    <domain>
        <recommendedName>
            <fullName>ATP-dependent cysteine adenylase</fullName>
            <shortName>CysA</shortName>
        </recommendedName>
        <alternativeName>
            <fullName>Cysteine activase</fullName>
        </alternativeName>
    </domain>
    <domain>
        <recommendedName>
            <fullName>ATP-dependent leucine adenylase</fullName>
            <shortName>LeuA</shortName>
        </recommendedName>
        <alternativeName>
            <fullName>Leucine activase</fullName>
        </alternativeName>
    </domain>
    <domain>
        <recommendedName>
            <fullName>ATP-dependent glutamate adenylase</fullName>
            <shortName>GluA</shortName>
        </recommendedName>
        <alternativeName>
            <fullName>Glutamate activase</fullName>
        </alternativeName>
    </domain>
    <domain>
        <recommendedName>
            <fullName>ATP-dependent isoleucine adenylase</fullName>
            <shortName>IleA</shortName>
        </recommendedName>
        <alternativeName>
            <fullName>Isoleucine activase</fullName>
        </alternativeName>
    </domain>
    <domain>
        <recommendedName>
            <fullName>Glutamate racemase</fullName>
            <ecNumber>5.1.1.3</ecNumber>
        </recommendedName>
    </domain>
</protein>
<feature type="chain" id="PRO_0000193082" description="Bacitracin synthase 1">
    <location>
        <begin position="1"/>
        <end position="5255"/>
    </location>
</feature>
<feature type="domain" description="Carrier 1" evidence="2">
    <location>
        <begin position="539"/>
        <end position="614"/>
    </location>
</feature>
<feature type="domain" description="Carrier 2" evidence="2">
    <location>
        <begin position="1580"/>
        <end position="1655"/>
    </location>
</feature>
<feature type="domain" description="Carrier 3" evidence="2">
    <location>
        <begin position="2616"/>
        <end position="2691"/>
    </location>
</feature>
<feature type="domain" description="Carrier 4" evidence="2">
    <location>
        <begin position="3659"/>
        <end position="3733"/>
    </location>
</feature>
<feature type="domain" description="Carrier 5" evidence="2">
    <location>
        <begin position="5166"/>
        <end position="5241"/>
    </location>
</feature>
<feature type="region of interest" description="Domain 1 (isoleucine-activating)">
    <location>
        <begin position="39"/>
        <end position="612"/>
    </location>
</feature>
<feature type="region of interest" description="Disordered" evidence="3">
    <location>
        <begin position="519"/>
        <end position="542"/>
    </location>
</feature>
<feature type="region of interest" description="Cyclization" evidence="1">
    <location>
        <begin position="621"/>
        <end position="1037"/>
    </location>
</feature>
<feature type="region of interest" description="Domain 2 (cysteine-activating)">
    <location>
        <begin position="1109"/>
        <end position="1648"/>
    </location>
</feature>
<feature type="region of interest" description="Domain 3 (leucine-activating)">
    <location>
        <begin position="2124"/>
        <end position="2689"/>
    </location>
</feature>
<feature type="region of interest" description="Domain 4 (glutamine-activating)">
    <location>
        <begin position="3164"/>
        <end position="3732"/>
    </location>
</feature>
<feature type="region of interest" description="Domain 5 (isoleucine-activating)">
    <location>
        <begin position="4668"/>
        <end position="5249"/>
    </location>
</feature>
<feature type="compositionally biased region" description="Basic and acidic residues" evidence="3">
    <location>
        <begin position="519"/>
        <end position="531"/>
    </location>
</feature>
<feature type="modified residue" description="O-(pantetheine 4'-phosphoryl)serine" evidence="2">
    <location>
        <position position="574"/>
    </location>
</feature>
<feature type="modified residue" description="O-(pantetheine 4'-phosphoryl)serine" evidence="2">
    <location>
        <position position="1615"/>
    </location>
</feature>
<feature type="modified residue" description="O-(pantetheine 4'-phosphoryl)serine" evidence="2">
    <location>
        <position position="2651"/>
    </location>
</feature>
<feature type="modified residue" description="O-(pantetheine 4'-phosphoryl)serine" evidence="2">
    <location>
        <position position="3694"/>
    </location>
</feature>
<feature type="modified residue" description="O-(pantetheine 4'-phosphoryl)serine" evidence="2">
    <location>
        <position position="5201"/>
    </location>
</feature>
<evidence type="ECO:0000255" key="1"/>
<evidence type="ECO:0000255" key="2">
    <source>
        <dbReference type="PROSITE-ProRule" id="PRU00258"/>
    </source>
</evidence>
<evidence type="ECO:0000256" key="3">
    <source>
        <dbReference type="SAM" id="MobiDB-lite"/>
    </source>
</evidence>
<evidence type="ECO:0000305" key="4"/>
<name>BACA_BACLI</name>
<comment type="function">
    <text>Activates five amino acids, incorporates two D-amino acids, releases and cyclizes the mature bacitracin.</text>
</comment>
<comment type="catalytic activity">
    <reaction>
        <text>L-glutamate = D-glutamate</text>
        <dbReference type="Rhea" id="RHEA:12813"/>
        <dbReference type="ChEBI" id="CHEBI:29985"/>
        <dbReference type="ChEBI" id="CHEBI:29986"/>
        <dbReference type="EC" id="5.1.1.3"/>
    </reaction>
</comment>
<comment type="cofactor">
    <cofactor evidence="4">
        <name>pantetheine 4'-phosphate</name>
        <dbReference type="ChEBI" id="CHEBI:47942"/>
    </cofactor>
    <text evidence="4">Binds 5 phosphopantetheines covalently.</text>
</comment>
<comment type="pathway">
    <text>Antibiotic biosynthesis; bacitracin biosynthesis.</text>
</comment>
<comment type="subunit">
    <text>Large multienzyme complex of BA1, BA2 and BA3.</text>
</comment>
<comment type="domain">
    <text>Consists of five modules and one epimerization domain in the fourth module. Each module incorporates one amino acid into the peptide product and can be further subdivided into domains responsible for substrate adenylation, thiolation, condensation (not for the initiation module), and epimerization (optional), and N methylation (optional).</text>
</comment>
<comment type="miscellaneous">
    <text>Bacitracin is a mixture of at least ten cyclic dodecapeptides, that differ by one or two amino acids. The most abundant is bacitracin A, a branched cyclic dodecapeptide. It contains an N-terminal linear pentapeptide moiety (Ile-Cys-Leu-D-Glu-Ile) with an isoleucine-cysteine thiazoline condensation product and a C-terminal heptapeptide ring (Lys-D-Orn-Ile-D-Phe-His-D-Asp-Asn), in which the free alpha-carboxy group of the C-terminal Asn is bound to the epsilon-amino group of Lys.</text>
</comment>
<comment type="similarity">
    <text evidence="4">Belongs to the ATP-dependent AMP-binding enzyme family.</text>
</comment>
<proteinExistence type="inferred from homology"/>
<accession>O68006</accession>
<reference key="1">
    <citation type="journal article" date="1997" name="Chem. Biol.">
        <title>The bacitracin biosynthesis operon of Bacillus licheniformis ATCC 10716: molecular characterization of three multi-modular peptide synthetases.</title>
        <authorList>
            <person name="Konz D."/>
            <person name="Klens A."/>
            <person name="Schoergendorfer K."/>
            <person name="Marahiel M.A."/>
        </authorList>
    </citation>
    <scope>NUCLEOTIDE SEQUENCE [GENOMIC DNA]</scope>
    <source>
        <strain>ATCC 10716 / DSM 603 / NBRC 12199 / NCIMB 8874 / Tracy I</strain>
    </source>
</reference>
<dbReference type="EC" id="5.1.1.3"/>
<dbReference type="EMBL" id="AF007865">
    <property type="protein sequence ID" value="AAC06346.1"/>
    <property type="molecule type" value="Genomic_DNA"/>
</dbReference>
<dbReference type="PIR" id="T31677">
    <property type="entry name" value="T31677"/>
</dbReference>
<dbReference type="SMR" id="O68006"/>
<dbReference type="UniPathway" id="UPA00179"/>
<dbReference type="GO" id="GO:0005737">
    <property type="term" value="C:cytoplasm"/>
    <property type="evidence" value="ECO:0007669"/>
    <property type="project" value="TreeGrafter"/>
</dbReference>
<dbReference type="GO" id="GO:0008881">
    <property type="term" value="F:glutamate racemase activity"/>
    <property type="evidence" value="ECO:0007669"/>
    <property type="project" value="UniProtKB-EC"/>
</dbReference>
<dbReference type="GO" id="GO:0016874">
    <property type="term" value="F:ligase activity"/>
    <property type="evidence" value="ECO:0007669"/>
    <property type="project" value="UniProtKB-KW"/>
</dbReference>
<dbReference type="GO" id="GO:0031177">
    <property type="term" value="F:phosphopantetheine binding"/>
    <property type="evidence" value="ECO:0007669"/>
    <property type="project" value="InterPro"/>
</dbReference>
<dbReference type="GO" id="GO:0043041">
    <property type="term" value="P:amino acid activation for nonribosomal peptide biosynthetic process"/>
    <property type="evidence" value="ECO:0007669"/>
    <property type="project" value="TreeGrafter"/>
</dbReference>
<dbReference type="GO" id="GO:0017000">
    <property type="term" value="P:antibiotic biosynthetic process"/>
    <property type="evidence" value="ECO:0007669"/>
    <property type="project" value="UniProtKB-KW"/>
</dbReference>
<dbReference type="GO" id="GO:0008610">
    <property type="term" value="P:lipid biosynthetic process"/>
    <property type="evidence" value="ECO:0007669"/>
    <property type="project" value="UniProtKB-ARBA"/>
</dbReference>
<dbReference type="GO" id="GO:0044550">
    <property type="term" value="P:secondary metabolite biosynthetic process"/>
    <property type="evidence" value="ECO:0007669"/>
    <property type="project" value="TreeGrafter"/>
</dbReference>
<dbReference type="CDD" id="cd17655">
    <property type="entry name" value="A_NRPS_Bac"/>
    <property type="match status" value="1"/>
</dbReference>
<dbReference type="CDD" id="cd17645">
    <property type="entry name" value="A_NRPS_LgrA-like"/>
    <property type="match status" value="1"/>
</dbReference>
<dbReference type="CDD" id="cd12117">
    <property type="entry name" value="A_NRPS_Srf_like"/>
    <property type="match status" value="2"/>
</dbReference>
<dbReference type="CDD" id="cd12114">
    <property type="entry name" value="A_NRPS_TlmIV_like"/>
    <property type="match status" value="1"/>
</dbReference>
<dbReference type="CDD" id="cd19535">
    <property type="entry name" value="Cyc_NRPS"/>
    <property type="match status" value="1"/>
</dbReference>
<dbReference type="CDD" id="cd19543">
    <property type="entry name" value="DCL_NRPS"/>
    <property type="match status" value="1"/>
</dbReference>
<dbReference type="CDD" id="cd19534">
    <property type="entry name" value="E_NRPS"/>
    <property type="match status" value="1"/>
</dbReference>
<dbReference type="CDD" id="cd19531">
    <property type="entry name" value="LCL_NRPS-like"/>
    <property type="match status" value="2"/>
</dbReference>
<dbReference type="FunFam" id="3.30.300.30:FF:000010">
    <property type="entry name" value="Enterobactin synthetase component F"/>
    <property type="match status" value="4"/>
</dbReference>
<dbReference type="FunFam" id="3.30.559.10:FF:000012">
    <property type="entry name" value="Non-ribosomal peptide synthetase"/>
    <property type="match status" value="1"/>
</dbReference>
<dbReference type="FunFam" id="3.30.559.10:FF:000023">
    <property type="entry name" value="Non-ribosomal peptide synthetase"/>
    <property type="match status" value="1"/>
</dbReference>
<dbReference type="FunFam" id="3.40.50.12780:FF:000012">
    <property type="entry name" value="Non-ribosomal peptide synthetase"/>
    <property type="match status" value="4"/>
</dbReference>
<dbReference type="FunFam" id="3.40.50.980:FF:000001">
    <property type="entry name" value="Non-ribosomal peptide synthetase"/>
    <property type="match status" value="4"/>
</dbReference>
<dbReference type="FunFam" id="2.30.38.10:FF:000001">
    <property type="entry name" value="Non-ribosomal peptide synthetase PvdI"/>
    <property type="match status" value="4"/>
</dbReference>
<dbReference type="FunFam" id="1.10.1200.10:FF:000005">
    <property type="entry name" value="Nonribosomal peptide synthetase 1"/>
    <property type="match status" value="3"/>
</dbReference>
<dbReference type="FunFam" id="3.30.559.30:FF:000006">
    <property type="entry name" value="Yersiniabactin polyketide/non-ribosomal peptide synthetase"/>
    <property type="match status" value="1"/>
</dbReference>
<dbReference type="Gene3D" id="3.30.300.30">
    <property type="match status" value="5"/>
</dbReference>
<dbReference type="Gene3D" id="3.40.50.980">
    <property type="match status" value="8"/>
</dbReference>
<dbReference type="Gene3D" id="1.10.1200.10">
    <property type="entry name" value="ACP-like"/>
    <property type="match status" value="5"/>
</dbReference>
<dbReference type="Gene3D" id="3.30.559.10">
    <property type="entry name" value="Chloramphenicol acetyltransferase-like domain"/>
    <property type="match status" value="5"/>
</dbReference>
<dbReference type="Gene3D" id="2.30.38.10">
    <property type="entry name" value="Luciferase, Domain 3"/>
    <property type="match status" value="4"/>
</dbReference>
<dbReference type="Gene3D" id="3.40.50.12780">
    <property type="entry name" value="N-terminal domain of ligase-like"/>
    <property type="match status" value="1"/>
</dbReference>
<dbReference type="Gene3D" id="3.30.559.30">
    <property type="entry name" value="Nonribosomal peptide synthetase, condensation domain"/>
    <property type="match status" value="5"/>
</dbReference>
<dbReference type="InterPro" id="IPR010071">
    <property type="entry name" value="AA_adenyl_dom"/>
</dbReference>
<dbReference type="InterPro" id="IPR036736">
    <property type="entry name" value="ACP-like_sf"/>
</dbReference>
<dbReference type="InterPro" id="IPR025110">
    <property type="entry name" value="AMP-bd_C"/>
</dbReference>
<dbReference type="InterPro" id="IPR045851">
    <property type="entry name" value="AMP-bd_C_sf"/>
</dbReference>
<dbReference type="InterPro" id="IPR020845">
    <property type="entry name" value="AMP-binding_CS"/>
</dbReference>
<dbReference type="InterPro" id="IPR000873">
    <property type="entry name" value="AMP-dep_synth/lig_dom"/>
</dbReference>
<dbReference type="InterPro" id="IPR042099">
    <property type="entry name" value="ANL_N_sf"/>
</dbReference>
<dbReference type="InterPro" id="IPR023213">
    <property type="entry name" value="CAT-like_dom_sf"/>
</dbReference>
<dbReference type="InterPro" id="IPR001242">
    <property type="entry name" value="Condensatn"/>
</dbReference>
<dbReference type="InterPro" id="IPR010060">
    <property type="entry name" value="NRPS_synth"/>
</dbReference>
<dbReference type="InterPro" id="IPR020806">
    <property type="entry name" value="PKS_PP-bd"/>
</dbReference>
<dbReference type="InterPro" id="IPR009081">
    <property type="entry name" value="PP-bd_ACP"/>
</dbReference>
<dbReference type="InterPro" id="IPR006162">
    <property type="entry name" value="Ppantetheine_attach_site"/>
</dbReference>
<dbReference type="NCBIfam" id="TIGR01733">
    <property type="entry name" value="AA-adenyl-dom"/>
    <property type="match status" value="5"/>
</dbReference>
<dbReference type="NCBIfam" id="TIGR01720">
    <property type="entry name" value="NRPS-para261"/>
    <property type="match status" value="1"/>
</dbReference>
<dbReference type="NCBIfam" id="NF003417">
    <property type="entry name" value="PRK04813.1"/>
    <property type="match status" value="5"/>
</dbReference>
<dbReference type="PANTHER" id="PTHR45527">
    <property type="entry name" value="NONRIBOSOMAL PEPTIDE SYNTHETASE"/>
    <property type="match status" value="1"/>
</dbReference>
<dbReference type="PANTHER" id="PTHR45527:SF10">
    <property type="entry name" value="PYOCHELIN SYNTHASE PCHF"/>
    <property type="match status" value="1"/>
</dbReference>
<dbReference type="Pfam" id="PF00501">
    <property type="entry name" value="AMP-binding"/>
    <property type="match status" value="5"/>
</dbReference>
<dbReference type="Pfam" id="PF13193">
    <property type="entry name" value="AMP-binding_C"/>
    <property type="match status" value="5"/>
</dbReference>
<dbReference type="Pfam" id="PF00668">
    <property type="entry name" value="Condensation"/>
    <property type="match status" value="5"/>
</dbReference>
<dbReference type="Pfam" id="PF00550">
    <property type="entry name" value="PP-binding"/>
    <property type="match status" value="5"/>
</dbReference>
<dbReference type="SMART" id="SM00823">
    <property type="entry name" value="PKS_PP"/>
    <property type="match status" value="5"/>
</dbReference>
<dbReference type="SMART" id="SM01294">
    <property type="entry name" value="PKS_PP_betabranch"/>
    <property type="match status" value="1"/>
</dbReference>
<dbReference type="SUPFAM" id="SSF56801">
    <property type="entry name" value="Acetyl-CoA synthetase-like"/>
    <property type="match status" value="5"/>
</dbReference>
<dbReference type="SUPFAM" id="SSF47336">
    <property type="entry name" value="ACP-like"/>
    <property type="match status" value="5"/>
</dbReference>
<dbReference type="SUPFAM" id="SSF52777">
    <property type="entry name" value="CoA-dependent acyltransferases"/>
    <property type="match status" value="10"/>
</dbReference>
<dbReference type="PROSITE" id="PS00455">
    <property type="entry name" value="AMP_BINDING"/>
    <property type="match status" value="5"/>
</dbReference>
<dbReference type="PROSITE" id="PS50075">
    <property type="entry name" value="CARRIER"/>
    <property type="match status" value="5"/>
</dbReference>
<dbReference type="PROSITE" id="PS00012">
    <property type="entry name" value="PHOSPHOPANTETHEINE"/>
    <property type="match status" value="3"/>
</dbReference>
<keyword id="KW-0045">Antibiotic biosynthesis</keyword>
<keyword id="KW-0413">Isomerase</keyword>
<keyword id="KW-0436">Ligase</keyword>
<keyword id="KW-0511">Multifunctional enzyme</keyword>
<keyword id="KW-0596">Phosphopantetheine</keyword>
<keyword id="KW-0597">Phosphoprotein</keyword>
<keyword id="KW-0677">Repeat</keyword>
<sequence>MVAKHSLENGVFHKMTENEKELILHFNNTKTDYPKNKTLHELFEEQAMKTPDHTALVFGAQRMTYRELNEKANQTARLLREKGIGRGSIAAIIADRSFEMIIGIIGILKAGGAYLPIDPETPKDRIAFMLSDTKAAVLLTQGKAADGIDCEADIVQLDREASDGFSKEPLSSVNDSGDTAYIIYTSGSTGTPKGVITPHYSVIRVVQNTNYIDITEDNVILQLSNYSFDGSVFDIFGALLNGASLVMIEKEALLNINRLGSAINEEKVSVMFITTALFNMIADIHVDCLSNLRKILFGGERASIPHVRKVLNHVGRDKLIHVYGPTESTVYATYYFINEIDDEAETIPIGSPLANTSVLIMDEAGKLVPIGVPGELCIAGDGLSKGYLNREELTAEKFIPHPFIPGERLYKTGDLAKWLPDGNIEFIGRIDHQVKIRGFRIELGEIESRLEMHEDINETIVTVREDEESRPYICAYITANREISLDELKGFLGEKLPEYMIPAYFVKLDKLPLTKNGKVDRKALPEPDRTAGAENEYEAPRNETEEKLAAVWQDVLHVEKAGIHDHFAQMGGHSLHAMELIAKIKEKMNVEIPLHQLFKLATIKELSAFIEANHQEDKGDTLVTRAADPENIHEIFPLTGIQLAYLVGRDETFEIGGVATNLTVEFEADVDLNRFQLTLQKLIDRHPILRTIVFENGTQKILEATQRYTIETQDLRGFTEEEINVRILEQREKMTSKIIDPSVWPLFELKTFMLPGEKKYFFLNVDPLICDDSSMKRLIREFKQLYENPGLQLPSLEYSFRDYVLASINFKQTSRYQKDQQYWLDKLDHFPSAPELPLKSDPAHVAKPSFKKFSTFLDGHTWNELKKKARHHHLTPTSVLCAAYAYILAYWSRQNHFAINLTVFNRIPFHPDVKNMIGDFTSLMLLDIHAEENMSSFWRFALNVQDTLLEALEHRHYDGVDVIRNIAKKNGMNKKAVMPIVFTSVLSENPDDSFDSLVDFDNIHFFSTRTSQVYIDNQVYEINGGLYITWDYVEQIFEHEVIESMFDQYIAVIQKAVSGEDVSTIQMNEKSRQMISAYNDTDQSFDAKPLHELFTGQVKHGPDRMALKHHDEVMTYQELDEKSNQVARFLIGKGVEKGDYIGVIGKRSLGTIVNLLAVLKTGAAYIPLDPDYPEERKAYIQSKSNCKFFISHDVYDKEHIERFSKAPVDRKVDLDDMAYVIFTSGSTGKPKGVQITHVPQRNTILDINEKFNVTEQDNIMGISSLCFDLSVYDVFGALSSGASLVIIDDQRDVFSLKETAEKERITIWNSVPAIMGMTADVYPDNELNHHLRLILLSGDWIPLQLPATIKKTFKNAEVISLGGATEGSIWSIYYPIQKVEEDWKSIPYGKPLANQKIYVLNQNKQLCPVGVEGELYIGGAGVASGYIHDQEKTEHSFIQHQELGYIYKTGDYGVLKEDGYVEFLGRKDSQVKIRGYRVEMGEIENTLVSHQEITKASVIDYTSPDGIKNLYAFVVAENAISQLDVKEFLQKTLPDYMIPAKFVQIEEIPLTVNGKVDKRTLHDLAEQHTADEGQRGGRMLPENETQAMLLEIWKDIFGLDSINLDVSYYEIGGDSLKAISIITEINKRMNVEMPISEIFKNDTIIALDHYLKNREESDMEHPIQKAREKEYYPTSPAQQRMYMLSMLENERGAYHIPMALLVEGRINAMQLENALKTFLQRHEILRTGFEIQNNELIQKIYENVDFRLEYECLDASITDQHALMEITSRYCKESIKPFDLSRPPLMRAKLIKIDDIRHILVINFHHIISDGVSQGILMNEILELYSNVPLPEVNVQYKDYVEWNHTFNQSAAMKKQEAYWLDVYRDIPSKLDFPYDYKRHHIDTFEGSSVFLEMERELSDHIRKLAKHNGTTLYTVMLSAYYVLLNKYTNQTDIVVGTAAAGRLHPDLQDVFGVFVNTLALRNEVDTSYSFKEFLQQTKERTIAAFDNSEYPFDDLIRKLNGVRESNRNPLFDTMFVLEDARMFTKQKGDVKLSPIIFELDNAKFDMIFNVLDFEQKIVLNIEYSTSLFKDETIQKIAEDYFRILEEVSENLDVALHQIDMISRQEKRTLLESFNHTKTAYPKGKAIHQLFEEQAKRIPDHTAVVFEDQKLTYRQLNEKANQVARLLREKGVKPDTLVGIMMERSSDMIAAILGVLKAGGAYLPIDPEYPPERMRYMAFDSEVKVIISDVPLAEELTAESIELIHMDDERIAGQDRSDIDNVNQSGDLAYVIYTSGSTGKPKGVMIEHQSLINLCSWHQSCFEVGQNDNSSIYASISFDAFVWELFPYITAGATVHVLNQETRLDVEKLNRYFHDHHITISFLPTPVCEQFTALDNHSLRTLLTGGDKLNVFKEKSYQIVNNYGPTENTVVATSFPIDKSHQNIPIGKPIDNVKVYILNKDLQLCPLGASGELCIAGEGLARGYVNRPELTREKFIGNPFVPGERMYRTGDLAKMLPDGNIQFLGRVDQQVKIRGYRIEPGEIENRLLKYEKIEEAAVIAREDGDHDPYLCAYVTVKKEVEPEKIRAFLKKSLPDYMIPQYFVQLDGLPLTVNGKVDKKSLPVPERSVTMDRRYEAPRDQMEEKLVSIWEEALGINKIGINSHFFEAGGHSLKAAALVSTIHKELNVKLPLRQIFETPTIKGLRDISVRRRKCFYIDRKTEEKPYYRLSSAQKRLYILSQTGSHVAYNMPFAMTLEGDFDIRRFENTLKNMVKRHESFRTSFVMIDGEVMQQIEKEIDFQVAYSDIGKESAEEKIKSFIRPFHLEKAPLLRAEVVKLNEREHLLMFDMHHIISDGVSTDIFIQELGALYEGKSLKPFHIQYKDYAEWENSHARSEELKRQEEYWLKTYKGDIPVLDLPIDHKRPLTKSSEGDTVTAAIESETFRKLQHMAKENGVTMYMLLLAGYTALLSKYTGQEDIIVGTPAAGRNHEDIQHLIGMFVNTLAIRNHPEGKKTFRDYLQEVKENTLQAYENQDYPFEELVEKVNIKRDMARNPLFDTMLVYHNTDVKPFEAEGLRSRLVEIKRGISKFDITVTASEAADGLRLEVEYSTTLFNKERMERLSEHLISLLEQAADHPDIAINQIDVLTKGERHRVLYDFNRTDGVFCKEMTIPELFEKQAEKTPDHPAVAFGDETISYRELNERANSLAFTLRQKGVGPDVIAGILTERSIEMIVGIMGILKAGGAYLPIDPAYPQERISYIVKDSDVSVLCAAGDVDPGEAYTGDIIRIDQTGQNDHVENLKHDIKPQHLAYVIYTSGSTGKPKGVMIEHHSVNNLVHGLNERIYQHLDAHLNVALVAPYIFDASVKQIFAALLFGHTLCIVPRETAWDAMSLIEYYSKNNINVSDMTPAHLNMLAYVDKTELEFDVKELIVGGDALTPDVIGGLFHKFPNLSCNITNVYGPTECCVDAASHQIESGKVPQTPSIPIGRPLLNTSIYIVDKELRPLPVGIAGELCIAGEGVARGYVNRPELTAEKFVDHPFEPGKKMYKTGDLAMWLPDGQIEFLGRADHQVKIRGYRIELGEVEQQLLTHEKIKEAAVIAGKDQNGNSYLCAYIASDKELPAADVRQFLEREMPDYMIPSYFVKLDRLPRTPSGKVDRSALPEADGNVNVMEGTGYDPPRNEIERKLVQVWREILGAEDIGISHHFFAAGGDSIKALQIVSRLAKMNLKLEMKALFANPKIKDLSRFITEETRHRKHNKPVTGETELLPIQKRYFANNKEELDHFNQSFMLFRKDGYDENIVRTAFNKILEQHDALRMIYEEKDGDIIQYNRGYRENLFDLDVYDVRGFDSQEEKVFELATGIQKKSSIRKGKLVHLGIFRADEGDHLLIAIHHLVVDGVSWRILFEDFETLYLQALKGEPLDIGYKTDSYQEFARQLKKYAQSRRLLKEREYWQKALEADVPFIPAEKLERDTFEHSATLSIRIGPDVTAKLLRNAFKAYNTEINDILLTALIAAVRDITGENKLKVMMEGHGREDILDGVDITRTIGWFTTVYPVFIDLGEEKEISQNIKMVKEALRKIPNKGIGYGVLKYMTEELQKIQTQAPLSFNYFGEMNNDMNRKVFSQSPFSPGESIGGKIVRHCAIEMNAISLNGELTIYTTFNQDQYQTSTIEQLNQSFKENLEKIVDHCVDKEGSDMTPSDYGDVSLGLEELELIKDKYSAFQIEKIYPLANMQKGMLFHNAMDQTSGAYFQQIVIKLKGRVHPDILEESFHEIVKRHEILRASFEYEITAEPRQIIARDRKTPFTSIDLTGENRTRQHRFIETYLKEDQEKGFDLSSEALMRVCLIKMSDESYRLIWSHHHILLDGWCLGIVLSELFSLYGKIMKGESRRLKEPKPYGDYIKWLEKQDQEEAVAYWKDYLKGYESRSELPAFNRGATSEEYCGKEKVISFSKELTTKITRIAKQHHVTINTVLQGIWGMILAKYKNTDEVVFGTVVSGREAPVDGIEEMVGLFIHTIPTRISFEGARSFKEVLKKTQAESIESNRYSYMNLSEIQVLSEMKRELITHVMAFQNYAFDEELFRSQSGETGFELEGVHGKERTNYNFNLTGVLEDEQLKLKLTFNENVYDNTIIETLEKHIITVAEQVAEDETQTLRDINLVSKEEQHRILHTFNDTKTGYPKDKPLHELFEEQAMKTPDHTALVFGAQRMTYRELNEKANQTARLLREKGIGRGSIAAIIADRSFEMIIGIIGILKAGGTYLPIDPETPRDRIDYMLKNSGAALLVTTDSLLKPFDIKTVDLCSDELHLLSEENLPRVNRSSDTAYIVYTSGSTGTPKGVVIPHYSAARVVKNTNYIDITGNDVILQLSNYSFDGSVFDIFGALLNGASLVLIEKETVLNTHELAEVIKKEQVSVMFITTALFNTLADINIGCLAKLRKILFGGERASIPHVRKVLDHVGRDKLIHVYGPTESTVYATYYFINEIDDEAETIPIGSPLANTSVLIMDEAGKLLPIGVPGELCIAGDGLSKGYLNREELTAEKFIPHPFIPGERLYKTGDLAKWLPDGNIEFIGRIDHQVKIRGFRIELGEIESRLEMHEDINETIVTVREDEESRPYICAYITANREISLDELKGFLGEKLPDYMIPAYFVKMDKLPLTKNGKVDRKALPEPDRSAGTEAEYEAPRNYVEQRIISILEDVLGTERMGISCHFFDKGGNSLKAMQAVHSINKTFGIDMRISTFFKHPTAKSLARFVLTAEAESAVSEEYAEEEV</sequence>
<organism>
    <name type="scientific">Bacillus licheniformis</name>
    <dbReference type="NCBI Taxonomy" id="1402"/>
    <lineage>
        <taxon>Bacteria</taxon>
        <taxon>Bacillati</taxon>
        <taxon>Bacillota</taxon>
        <taxon>Bacilli</taxon>
        <taxon>Bacillales</taxon>
        <taxon>Bacillaceae</taxon>
        <taxon>Bacillus</taxon>
    </lineage>
</organism>
<gene>
    <name type="primary">bacA</name>
</gene>